<evidence type="ECO:0000250" key="1"/>
<name>SDIS_NOCSI</name>
<dbReference type="EC" id="5.3.3.1"/>
<dbReference type="EMBL" id="D37969">
    <property type="protein sequence ID" value="BAA07187.1"/>
    <property type="molecule type" value="Genomic_DNA"/>
</dbReference>
<dbReference type="EMBL" id="Z93338">
    <property type="protein sequence ID" value="CAB07540.1"/>
    <property type="molecule type" value="Genomic_DNA"/>
</dbReference>
<dbReference type="PIR" id="S61890">
    <property type="entry name" value="S61890"/>
</dbReference>
<dbReference type="RefSeq" id="WP_038682822.1">
    <property type="nucleotide sequence ID" value="NZ_BJMC01000016.1"/>
</dbReference>
<dbReference type="SMR" id="P77816"/>
<dbReference type="STRING" id="2045.KR76_27120"/>
<dbReference type="GeneID" id="96612409"/>
<dbReference type="eggNOG" id="COG3631">
    <property type="taxonomic scope" value="Bacteria"/>
</dbReference>
<dbReference type="OrthoDB" id="459617at2"/>
<dbReference type="GO" id="GO:0004769">
    <property type="term" value="F:steroid Delta-isomerase activity"/>
    <property type="evidence" value="ECO:0007669"/>
    <property type="project" value="UniProtKB-EC"/>
</dbReference>
<dbReference type="GO" id="GO:0008202">
    <property type="term" value="P:steroid metabolic process"/>
    <property type="evidence" value="ECO:0007669"/>
    <property type="project" value="UniProtKB-KW"/>
</dbReference>
<dbReference type="Gene3D" id="3.10.450.50">
    <property type="match status" value="1"/>
</dbReference>
<dbReference type="InterPro" id="IPR032710">
    <property type="entry name" value="NTF2-like_dom_sf"/>
</dbReference>
<dbReference type="InterPro" id="IPR037401">
    <property type="entry name" value="SnoaL-like"/>
</dbReference>
<dbReference type="Pfam" id="PF12680">
    <property type="entry name" value="SnoaL_2"/>
    <property type="match status" value="1"/>
</dbReference>
<dbReference type="SUPFAM" id="SSF54427">
    <property type="entry name" value="NTF2-like"/>
    <property type="match status" value="1"/>
</dbReference>
<keyword id="KW-0413">Isomerase</keyword>
<keyword id="KW-0443">Lipid metabolism</keyword>
<keyword id="KW-0753">Steroid metabolism</keyword>
<organism>
    <name type="scientific">Nocardioides simplex</name>
    <name type="common">Arthrobacter simplex</name>
    <dbReference type="NCBI Taxonomy" id="2045"/>
    <lineage>
        <taxon>Bacteria</taxon>
        <taxon>Bacillati</taxon>
        <taxon>Actinomycetota</taxon>
        <taxon>Actinomycetes</taxon>
        <taxon>Propionibacteriales</taxon>
        <taxon>Nocardioidaceae</taxon>
        <taxon>Pimelobacter</taxon>
    </lineage>
</organism>
<proteinExistence type="inferred from homology"/>
<accession>P77816</accession>
<accession>O08058</accession>
<comment type="catalytic activity">
    <reaction>
        <text>a 3-oxo-Delta(5)-steroid = a 3-oxo-Delta(4)-steroid</text>
        <dbReference type="Rhea" id="RHEA:14709"/>
        <dbReference type="ChEBI" id="CHEBI:47907"/>
        <dbReference type="ChEBI" id="CHEBI:47909"/>
        <dbReference type="EC" id="5.3.3.1"/>
    </reaction>
</comment>
<comment type="subunit">
    <text evidence="1">Homodimer.</text>
</comment>
<protein>
    <recommendedName>
        <fullName>Steroid Delta-isomerase</fullName>
        <ecNumber>5.3.3.1</ecNumber>
    </recommendedName>
    <alternativeName>
        <fullName>Delta(5)-3-ketosteroid isomerase</fullName>
    </alternativeName>
</protein>
<sequence>MSAEVKAAVARYLDAVAGGSPAAIAALYAPDATLEDPVGADLVRGRAAIEEFYGALAGAKVSTELLAVRAVAGHAAFSFRVTTDAGDQQYVVEPIDVMTFDADGQITSMRAFWAPGDMVVTPA</sequence>
<feature type="chain" id="PRO_0000097645" description="Steroid Delta-isomerase">
    <location>
        <begin position="1"/>
        <end position="123"/>
    </location>
</feature>
<feature type="active site" description="Proton donor" evidence="1">
    <location>
        <position position="12"/>
    </location>
</feature>
<feature type="active site" description="Proton acceptor" evidence="1">
    <location>
        <position position="36"/>
    </location>
</feature>
<feature type="binding site" evidence="1">
    <location>
        <position position="96"/>
    </location>
    <ligand>
        <name>substrate</name>
    </ligand>
</feature>
<gene>
    <name type="primary">ksdI</name>
</gene>
<reference key="1">
    <citation type="journal article" date="1995" name="Mol. Microbiol.">
        <title>Molecular cloning, expression in Streptomyces lividans, and analysis of a gene cluster from Arthrobacter simplex encoding 3-ketosteroid-delta 1-dehydrogenase, 3-ketosteroid-delta 5-isomerase and a hypothetical regulatory protein.</title>
        <authorList>
            <person name="Molnar I."/>
            <person name="Choi K.P."/>
            <person name="Yamashita M."/>
            <person name="Murooka Y."/>
        </authorList>
    </citation>
    <scope>NUCLEOTIDE SEQUENCE [GENOMIC DNA]</scope>
    <source>
        <strain>ATCC 6946 / DSM 20130 / BCRC 10381 / CCUG 23611 / CIP 82.106 / JCM 1363 / NBRC 12069 / NCIMB 8929 / NCTC 4215 / NRRL B-14051</strain>
    </source>
</reference>
<reference key="2">
    <citation type="submission" date="1997-03" db="EMBL/GenBank/DDBJ databases">
        <authorList>
            <person name="Dziadek J."/>
            <person name="Yamashita M."/>
            <person name="Murooka Y."/>
        </authorList>
    </citation>
    <scope>NUCLEOTIDE SEQUENCE [GENOMIC DNA]</scope>
    <source>
        <strain>ATCC 6946 / DSM 20130 / BCRC 10381 / CCUG 23611 / CIP 82.106 / JCM 1363 / NBRC 12069 / NCIMB 8929 / NCTC 4215 / NRRL B-14051</strain>
    </source>
</reference>